<name>CYT2_CROAD</name>
<accession>J3SE80</accession>
<sequence>MALLRGFLVCSLLLLSCICKEALGTRLLGGLENASPEEPGVARALQFAMNEYNRGSNDMYSSRVSEVVEAQKQIVSGIKYYFTVKIGRTVCRKGATDLENCAFHNAPKLAQTMTCTFEVYNIPWRNFISLEKSSCT</sequence>
<evidence type="ECO:0000250" key="1"/>
<evidence type="ECO:0000255" key="2"/>
<evidence type="ECO:0000305" key="3"/>
<proteinExistence type="evidence at transcript level"/>
<organism>
    <name type="scientific">Crotalus adamanteus</name>
    <name type="common">Eastern diamondback rattlesnake</name>
    <dbReference type="NCBI Taxonomy" id="8729"/>
    <lineage>
        <taxon>Eukaryota</taxon>
        <taxon>Metazoa</taxon>
        <taxon>Chordata</taxon>
        <taxon>Craniata</taxon>
        <taxon>Vertebrata</taxon>
        <taxon>Euteleostomi</taxon>
        <taxon>Lepidosauria</taxon>
        <taxon>Squamata</taxon>
        <taxon>Bifurcata</taxon>
        <taxon>Unidentata</taxon>
        <taxon>Episquamata</taxon>
        <taxon>Toxicofera</taxon>
        <taxon>Serpentes</taxon>
        <taxon>Colubroidea</taxon>
        <taxon>Viperidae</taxon>
        <taxon>Crotalinae</taxon>
        <taxon>Crotalus</taxon>
    </lineage>
</organism>
<keyword id="KW-1015">Disulfide bond</keyword>
<keyword id="KW-0646">Protease inhibitor</keyword>
<keyword id="KW-0964">Secreted</keyword>
<keyword id="KW-0732">Signal</keyword>
<keyword id="KW-0789">Thiol protease inhibitor</keyword>
<protein>
    <recommendedName>
        <fullName>Cystatin-2</fullName>
    </recommendedName>
</protein>
<comment type="function">
    <text evidence="1">Inhibits various C1 cysteine proteases including cathepsin L, papain and cathepsin B. This protein has no toxic activity and its function in the venom is unknown. It may play a role as housekeeping or regulatory protein (By similarity).</text>
</comment>
<comment type="subcellular location">
    <subcellularLocation>
        <location evidence="1">Secreted</location>
    </subcellularLocation>
</comment>
<comment type="tissue specificity">
    <text>Expressed by the venom gland.</text>
</comment>
<comment type="similarity">
    <text evidence="3">Belongs to the cystatin family.</text>
</comment>
<dbReference type="EMBL" id="JU174280">
    <property type="protein sequence ID" value="AFJ49806.1"/>
    <property type="molecule type" value="mRNA"/>
</dbReference>
<dbReference type="SMR" id="J3SE80"/>
<dbReference type="MEROPS" id="I25.011"/>
<dbReference type="GO" id="GO:0005737">
    <property type="term" value="C:cytoplasm"/>
    <property type="evidence" value="ECO:0007669"/>
    <property type="project" value="TreeGrafter"/>
</dbReference>
<dbReference type="GO" id="GO:0005615">
    <property type="term" value="C:extracellular space"/>
    <property type="evidence" value="ECO:0007669"/>
    <property type="project" value="TreeGrafter"/>
</dbReference>
<dbReference type="GO" id="GO:0031982">
    <property type="term" value="C:vesicle"/>
    <property type="evidence" value="ECO:0007669"/>
    <property type="project" value="TreeGrafter"/>
</dbReference>
<dbReference type="GO" id="GO:0004869">
    <property type="term" value="F:cysteine-type endopeptidase inhibitor activity"/>
    <property type="evidence" value="ECO:0007669"/>
    <property type="project" value="UniProtKB-KW"/>
</dbReference>
<dbReference type="CDD" id="cd00042">
    <property type="entry name" value="CY"/>
    <property type="match status" value="1"/>
</dbReference>
<dbReference type="FunFam" id="3.10.450.10:FF:000004">
    <property type="entry name" value="Cystatin C"/>
    <property type="match status" value="1"/>
</dbReference>
<dbReference type="Gene3D" id="3.10.450.10">
    <property type="match status" value="1"/>
</dbReference>
<dbReference type="InterPro" id="IPR000010">
    <property type="entry name" value="Cystatin_dom"/>
</dbReference>
<dbReference type="InterPro" id="IPR046350">
    <property type="entry name" value="Cystatin_sf"/>
</dbReference>
<dbReference type="InterPro" id="IPR018073">
    <property type="entry name" value="Prot_inh_cystat_CS"/>
</dbReference>
<dbReference type="PANTHER" id="PTHR46186">
    <property type="entry name" value="CYSTATIN"/>
    <property type="match status" value="1"/>
</dbReference>
<dbReference type="PANTHER" id="PTHR46186:SF2">
    <property type="entry name" value="CYSTATIN"/>
    <property type="match status" value="1"/>
</dbReference>
<dbReference type="Pfam" id="PF00031">
    <property type="entry name" value="Cystatin"/>
    <property type="match status" value="1"/>
</dbReference>
<dbReference type="SMART" id="SM00043">
    <property type="entry name" value="CY"/>
    <property type="match status" value="1"/>
</dbReference>
<dbReference type="SUPFAM" id="SSF54403">
    <property type="entry name" value="Cystatin/monellin"/>
    <property type="match status" value="1"/>
</dbReference>
<dbReference type="PROSITE" id="PS00287">
    <property type="entry name" value="CYSTATIN"/>
    <property type="match status" value="1"/>
</dbReference>
<feature type="signal peptide" evidence="2">
    <location>
        <begin position="1"/>
        <end position="24"/>
    </location>
</feature>
<feature type="chain" id="PRO_0000423039" description="Cystatin-2">
    <location>
        <begin position="25"/>
        <end position="136"/>
    </location>
</feature>
<feature type="domain" description="Cystatin">
    <location>
        <begin position="29"/>
        <end position="124"/>
    </location>
</feature>
<feature type="short sequence motif" description="Secondary area of contact" evidence="1">
    <location>
        <begin position="73"/>
        <end position="77"/>
    </location>
</feature>
<feature type="site" description="Reactive site" evidence="1">
    <location>
        <position position="29"/>
    </location>
</feature>
<feature type="disulfide bond" evidence="1">
    <location>
        <begin position="91"/>
        <end position="101"/>
    </location>
</feature>
<feature type="disulfide bond" evidence="1">
    <location>
        <begin position="115"/>
        <end position="135"/>
    </location>
</feature>
<reference key="1">
    <citation type="journal article" date="2012" name="BMC Genomics">
        <title>The venom-gland transcriptome of the eastern diamondback rattlesnake (Crotalus adamanteus).</title>
        <authorList>
            <person name="Rokyta D.R."/>
            <person name="Lemmon A.R."/>
            <person name="Margres M.J."/>
            <person name="Aronow K."/>
        </authorList>
    </citation>
    <scope>NUCLEOTIDE SEQUENCE [MRNA]</scope>
    <source>
        <tissue>Venom gland</tissue>
    </source>
</reference>